<evidence type="ECO:0000255" key="1">
    <source>
        <dbReference type="HAMAP-Rule" id="MF_00514"/>
    </source>
</evidence>
<evidence type="ECO:0000256" key="2">
    <source>
        <dbReference type="SAM" id="MobiDB-lite"/>
    </source>
</evidence>
<evidence type="ECO:0000305" key="3"/>
<sequence>MPKLKTKSSAKKRFKVTASGRVMSAQSTKRHGMTKRSKRSLRTRRGIAQMSAPDARIVASFMPYSL</sequence>
<keyword id="KW-0687">Ribonucleoprotein</keyword>
<keyword id="KW-0689">Ribosomal protein</keyword>
<feature type="chain" id="PRO_0000258631" description="Large ribosomal subunit protein bL35">
    <location>
        <begin position="1"/>
        <end position="66"/>
    </location>
</feature>
<feature type="region of interest" description="Disordered" evidence="2">
    <location>
        <begin position="1"/>
        <end position="49"/>
    </location>
</feature>
<feature type="compositionally biased region" description="Basic residues" evidence="2">
    <location>
        <begin position="1"/>
        <end position="15"/>
    </location>
</feature>
<feature type="compositionally biased region" description="Basic residues" evidence="2">
    <location>
        <begin position="28"/>
        <end position="45"/>
    </location>
</feature>
<proteinExistence type="inferred from homology"/>
<accession>Q5PBV4</accession>
<organism>
    <name type="scientific">Anaplasma marginale (strain St. Maries)</name>
    <dbReference type="NCBI Taxonomy" id="234826"/>
    <lineage>
        <taxon>Bacteria</taxon>
        <taxon>Pseudomonadati</taxon>
        <taxon>Pseudomonadota</taxon>
        <taxon>Alphaproteobacteria</taxon>
        <taxon>Rickettsiales</taxon>
        <taxon>Anaplasmataceae</taxon>
        <taxon>Anaplasma</taxon>
    </lineage>
</organism>
<gene>
    <name evidence="1" type="primary">rpmI</name>
    <name type="ordered locus">AM053</name>
</gene>
<name>RL35_ANAMM</name>
<reference key="1">
    <citation type="journal article" date="2005" name="Proc. Natl. Acad. Sci. U.S.A.">
        <title>Complete genome sequencing of Anaplasma marginale reveals that the surface is skewed to two superfamilies of outer membrane proteins.</title>
        <authorList>
            <person name="Brayton K.A."/>
            <person name="Kappmeyer L.S."/>
            <person name="Herndon D.R."/>
            <person name="Dark M.J."/>
            <person name="Tibbals D.L."/>
            <person name="Palmer G.H."/>
            <person name="McGuire T.C."/>
            <person name="Knowles D.P. Jr."/>
        </authorList>
    </citation>
    <scope>NUCLEOTIDE SEQUENCE [LARGE SCALE GENOMIC DNA]</scope>
    <source>
        <strain>St. Maries</strain>
    </source>
</reference>
<dbReference type="EMBL" id="CP000030">
    <property type="protein sequence ID" value="AAV86225.1"/>
    <property type="molecule type" value="Genomic_DNA"/>
</dbReference>
<dbReference type="RefSeq" id="WP_010262434.1">
    <property type="nucleotide sequence ID" value="NZ_AFMU01000001.1"/>
</dbReference>
<dbReference type="SMR" id="Q5PBV4"/>
<dbReference type="GeneID" id="31479917"/>
<dbReference type="KEGG" id="ama:AM053"/>
<dbReference type="HOGENOM" id="CLU_169643_2_1_5"/>
<dbReference type="GO" id="GO:1990904">
    <property type="term" value="C:ribonucleoprotein complex"/>
    <property type="evidence" value="ECO:0007669"/>
    <property type="project" value="UniProtKB-KW"/>
</dbReference>
<dbReference type="GO" id="GO:0005840">
    <property type="term" value="C:ribosome"/>
    <property type="evidence" value="ECO:0007669"/>
    <property type="project" value="UniProtKB-KW"/>
</dbReference>
<dbReference type="GO" id="GO:0003735">
    <property type="term" value="F:structural constituent of ribosome"/>
    <property type="evidence" value="ECO:0007669"/>
    <property type="project" value="InterPro"/>
</dbReference>
<dbReference type="GO" id="GO:0006412">
    <property type="term" value="P:translation"/>
    <property type="evidence" value="ECO:0007669"/>
    <property type="project" value="UniProtKB-UniRule"/>
</dbReference>
<dbReference type="FunFam" id="4.10.410.60:FF:000001">
    <property type="entry name" value="50S ribosomal protein L35"/>
    <property type="match status" value="1"/>
</dbReference>
<dbReference type="Gene3D" id="4.10.410.60">
    <property type="match status" value="1"/>
</dbReference>
<dbReference type="HAMAP" id="MF_00514">
    <property type="entry name" value="Ribosomal_bL35"/>
    <property type="match status" value="1"/>
</dbReference>
<dbReference type="InterPro" id="IPR001706">
    <property type="entry name" value="Ribosomal_bL35"/>
</dbReference>
<dbReference type="InterPro" id="IPR021137">
    <property type="entry name" value="Ribosomal_bL35-like"/>
</dbReference>
<dbReference type="InterPro" id="IPR018265">
    <property type="entry name" value="Ribosomal_bL35_CS"/>
</dbReference>
<dbReference type="InterPro" id="IPR037229">
    <property type="entry name" value="Ribosomal_bL35_sf"/>
</dbReference>
<dbReference type="NCBIfam" id="TIGR00001">
    <property type="entry name" value="rpmI_bact"/>
    <property type="match status" value="1"/>
</dbReference>
<dbReference type="Pfam" id="PF01632">
    <property type="entry name" value="Ribosomal_L35p"/>
    <property type="match status" value="1"/>
</dbReference>
<dbReference type="PRINTS" id="PR00064">
    <property type="entry name" value="RIBOSOMALL35"/>
</dbReference>
<dbReference type="SUPFAM" id="SSF143034">
    <property type="entry name" value="L35p-like"/>
    <property type="match status" value="1"/>
</dbReference>
<dbReference type="PROSITE" id="PS00936">
    <property type="entry name" value="RIBOSOMAL_L35"/>
    <property type="match status" value="1"/>
</dbReference>
<comment type="similarity">
    <text evidence="1">Belongs to the bacterial ribosomal protein bL35 family.</text>
</comment>
<protein>
    <recommendedName>
        <fullName evidence="1">Large ribosomal subunit protein bL35</fullName>
    </recommendedName>
    <alternativeName>
        <fullName evidence="3">50S ribosomal protein L35</fullName>
    </alternativeName>
</protein>